<evidence type="ECO:0000255" key="1">
    <source>
        <dbReference type="HAMAP-Rule" id="MF_00051"/>
    </source>
</evidence>
<keyword id="KW-0028">Amino-acid biosynthesis</keyword>
<keyword id="KW-0963">Cytoplasm</keyword>
<keyword id="KW-0554">One-carbon metabolism</keyword>
<keyword id="KW-0663">Pyridoxal phosphate</keyword>
<keyword id="KW-0808">Transferase</keyword>
<reference key="1">
    <citation type="journal article" date="2007" name="PLoS ONE">
        <title>Genome sequencing shows that European isolates of Francisella tularensis subspecies tularensis are almost identical to US laboratory strain Schu S4.</title>
        <authorList>
            <person name="Chaudhuri R.R."/>
            <person name="Ren C.-P."/>
            <person name="Desmond L."/>
            <person name="Vincent G.A."/>
            <person name="Silman N.J."/>
            <person name="Brehm J.K."/>
            <person name="Elmore M.J."/>
            <person name="Hudson M.J."/>
            <person name="Forsman M."/>
            <person name="Isherwood K.E."/>
            <person name="Gurycova D."/>
            <person name="Minton N.P."/>
            <person name="Titball R.W."/>
            <person name="Pallen M.J."/>
            <person name="Vipond R."/>
        </authorList>
    </citation>
    <scope>NUCLEOTIDE SEQUENCE [LARGE SCALE GENOMIC DNA]</scope>
    <source>
        <strain>FSC 198</strain>
    </source>
</reference>
<proteinExistence type="inferred from homology"/>
<dbReference type="EC" id="2.1.2.1" evidence="1"/>
<dbReference type="EMBL" id="AM286280">
    <property type="protein sequence ID" value="CAL09257.1"/>
    <property type="molecule type" value="Genomic_DNA"/>
</dbReference>
<dbReference type="RefSeq" id="WP_003021543.1">
    <property type="nucleotide sequence ID" value="NC_008245.1"/>
</dbReference>
<dbReference type="SMR" id="Q14GZ5"/>
<dbReference type="KEGG" id="ftf:FTF1241"/>
<dbReference type="HOGENOM" id="CLU_022477_2_1_6"/>
<dbReference type="UniPathway" id="UPA00193"/>
<dbReference type="UniPathway" id="UPA00288">
    <property type="reaction ID" value="UER01023"/>
</dbReference>
<dbReference type="GO" id="GO:0005829">
    <property type="term" value="C:cytosol"/>
    <property type="evidence" value="ECO:0007669"/>
    <property type="project" value="TreeGrafter"/>
</dbReference>
<dbReference type="GO" id="GO:0004372">
    <property type="term" value="F:glycine hydroxymethyltransferase activity"/>
    <property type="evidence" value="ECO:0007669"/>
    <property type="project" value="UniProtKB-UniRule"/>
</dbReference>
<dbReference type="GO" id="GO:0030170">
    <property type="term" value="F:pyridoxal phosphate binding"/>
    <property type="evidence" value="ECO:0007669"/>
    <property type="project" value="UniProtKB-UniRule"/>
</dbReference>
<dbReference type="GO" id="GO:0019264">
    <property type="term" value="P:glycine biosynthetic process from serine"/>
    <property type="evidence" value="ECO:0007669"/>
    <property type="project" value="UniProtKB-UniRule"/>
</dbReference>
<dbReference type="GO" id="GO:0035999">
    <property type="term" value="P:tetrahydrofolate interconversion"/>
    <property type="evidence" value="ECO:0007669"/>
    <property type="project" value="UniProtKB-UniRule"/>
</dbReference>
<dbReference type="CDD" id="cd00378">
    <property type="entry name" value="SHMT"/>
    <property type="match status" value="1"/>
</dbReference>
<dbReference type="FunFam" id="3.40.640.10:FF:000001">
    <property type="entry name" value="Serine hydroxymethyltransferase"/>
    <property type="match status" value="1"/>
</dbReference>
<dbReference type="FunFam" id="3.90.1150.10:FF:000003">
    <property type="entry name" value="Serine hydroxymethyltransferase"/>
    <property type="match status" value="1"/>
</dbReference>
<dbReference type="Gene3D" id="3.90.1150.10">
    <property type="entry name" value="Aspartate Aminotransferase, domain 1"/>
    <property type="match status" value="1"/>
</dbReference>
<dbReference type="Gene3D" id="3.40.640.10">
    <property type="entry name" value="Type I PLP-dependent aspartate aminotransferase-like (Major domain)"/>
    <property type="match status" value="1"/>
</dbReference>
<dbReference type="HAMAP" id="MF_00051">
    <property type="entry name" value="SHMT"/>
    <property type="match status" value="1"/>
</dbReference>
<dbReference type="InterPro" id="IPR015424">
    <property type="entry name" value="PyrdxlP-dep_Trfase"/>
</dbReference>
<dbReference type="InterPro" id="IPR015421">
    <property type="entry name" value="PyrdxlP-dep_Trfase_major"/>
</dbReference>
<dbReference type="InterPro" id="IPR015422">
    <property type="entry name" value="PyrdxlP-dep_Trfase_small"/>
</dbReference>
<dbReference type="InterPro" id="IPR001085">
    <property type="entry name" value="Ser_HO-MeTrfase"/>
</dbReference>
<dbReference type="InterPro" id="IPR049943">
    <property type="entry name" value="Ser_HO-MeTrfase-like"/>
</dbReference>
<dbReference type="InterPro" id="IPR019798">
    <property type="entry name" value="Ser_HO-MeTrfase_PLP_BS"/>
</dbReference>
<dbReference type="InterPro" id="IPR039429">
    <property type="entry name" value="SHMT-like_dom"/>
</dbReference>
<dbReference type="NCBIfam" id="NF000586">
    <property type="entry name" value="PRK00011.1"/>
    <property type="match status" value="1"/>
</dbReference>
<dbReference type="PANTHER" id="PTHR11680">
    <property type="entry name" value="SERINE HYDROXYMETHYLTRANSFERASE"/>
    <property type="match status" value="1"/>
</dbReference>
<dbReference type="PANTHER" id="PTHR11680:SF50">
    <property type="entry name" value="SERINE HYDROXYMETHYLTRANSFERASE"/>
    <property type="match status" value="1"/>
</dbReference>
<dbReference type="Pfam" id="PF00464">
    <property type="entry name" value="SHMT"/>
    <property type="match status" value="1"/>
</dbReference>
<dbReference type="PIRSF" id="PIRSF000412">
    <property type="entry name" value="SHMT"/>
    <property type="match status" value="1"/>
</dbReference>
<dbReference type="SUPFAM" id="SSF53383">
    <property type="entry name" value="PLP-dependent transferases"/>
    <property type="match status" value="1"/>
</dbReference>
<dbReference type="PROSITE" id="PS00096">
    <property type="entry name" value="SHMT"/>
    <property type="match status" value="1"/>
</dbReference>
<accession>Q14GZ5</accession>
<name>GLYA_FRAT1</name>
<sequence length="417" mass="45316">MFSFEKNSLKNTDKEIFDAIELEVKRQHEHVELIASENYASPAVMEAQGSQLTNKYAEGYHGKRYYGGCEFVDIAEKLAIERAQQLFGVDYANVQPHSGSQANAAVYNAVLKPGDTVLGMDLGAGGHLTHGSKVNFSGKIYNSIQYGLDENGDIDYKQVAQLAKEHKPKMIIAGFSAFSGIINWQKFREIADSVDAVLMADIAHVAGLVAAGVYPNPFPYVYVATTTTHKTLRGPRGGLILCNNNPELAKKFQSAIFPGIQGGPLMHVIAAKAVAFKEALEPSFVDYQKQVLKNAKAMEKVLKQRGINIISGGTSNHLLLLDITNTGFSGKEAEAALGRANITVNKNSIPNDPRSPFVTSGLRIGSPAITTRGFKEKECELVANLLADVVFNCGDEKVENETAAKVLDLCDKFPVYK</sequence>
<comment type="function">
    <text evidence="1">Catalyzes the reversible interconversion of serine and glycine with tetrahydrofolate (THF) serving as the one-carbon carrier. This reaction serves as the major source of one-carbon groups required for the biosynthesis of purines, thymidylate, methionine, and other important biomolecules. Also exhibits THF-independent aldolase activity toward beta-hydroxyamino acids, producing glycine and aldehydes, via a retro-aldol mechanism.</text>
</comment>
<comment type="catalytic activity">
    <reaction evidence="1">
        <text>(6R)-5,10-methylene-5,6,7,8-tetrahydrofolate + glycine + H2O = (6S)-5,6,7,8-tetrahydrofolate + L-serine</text>
        <dbReference type="Rhea" id="RHEA:15481"/>
        <dbReference type="ChEBI" id="CHEBI:15377"/>
        <dbReference type="ChEBI" id="CHEBI:15636"/>
        <dbReference type="ChEBI" id="CHEBI:33384"/>
        <dbReference type="ChEBI" id="CHEBI:57305"/>
        <dbReference type="ChEBI" id="CHEBI:57453"/>
        <dbReference type="EC" id="2.1.2.1"/>
    </reaction>
</comment>
<comment type="cofactor">
    <cofactor evidence="1">
        <name>pyridoxal 5'-phosphate</name>
        <dbReference type="ChEBI" id="CHEBI:597326"/>
    </cofactor>
</comment>
<comment type="pathway">
    <text evidence="1">One-carbon metabolism; tetrahydrofolate interconversion.</text>
</comment>
<comment type="pathway">
    <text evidence="1">Amino-acid biosynthesis; glycine biosynthesis; glycine from L-serine: step 1/1.</text>
</comment>
<comment type="subunit">
    <text evidence="1">Homodimer.</text>
</comment>
<comment type="subcellular location">
    <subcellularLocation>
        <location evidence="1">Cytoplasm</location>
    </subcellularLocation>
</comment>
<comment type="similarity">
    <text evidence="1">Belongs to the SHMT family.</text>
</comment>
<organism>
    <name type="scientific">Francisella tularensis subsp. tularensis (strain FSC 198)</name>
    <dbReference type="NCBI Taxonomy" id="393115"/>
    <lineage>
        <taxon>Bacteria</taxon>
        <taxon>Pseudomonadati</taxon>
        <taxon>Pseudomonadota</taxon>
        <taxon>Gammaproteobacteria</taxon>
        <taxon>Thiotrichales</taxon>
        <taxon>Francisellaceae</taxon>
        <taxon>Francisella</taxon>
    </lineage>
</organism>
<gene>
    <name evidence="1" type="primary">glyA</name>
    <name type="ordered locus">FTF1241</name>
</gene>
<feature type="chain" id="PRO_1000006250" description="Serine hydroxymethyltransferase">
    <location>
        <begin position="1"/>
        <end position="417"/>
    </location>
</feature>
<feature type="binding site" evidence="1">
    <location>
        <position position="122"/>
    </location>
    <ligand>
        <name>(6S)-5,6,7,8-tetrahydrofolate</name>
        <dbReference type="ChEBI" id="CHEBI:57453"/>
    </ligand>
</feature>
<feature type="binding site" evidence="1">
    <location>
        <begin position="126"/>
        <end position="128"/>
    </location>
    <ligand>
        <name>(6S)-5,6,7,8-tetrahydrofolate</name>
        <dbReference type="ChEBI" id="CHEBI:57453"/>
    </ligand>
</feature>
<feature type="binding site" evidence="1">
    <location>
        <begin position="355"/>
        <end position="357"/>
    </location>
    <ligand>
        <name>(6S)-5,6,7,8-tetrahydrofolate</name>
        <dbReference type="ChEBI" id="CHEBI:57453"/>
    </ligand>
</feature>
<feature type="site" description="Plays an important role in substrate specificity" evidence="1">
    <location>
        <position position="229"/>
    </location>
</feature>
<feature type="modified residue" description="N6-(pyridoxal phosphate)lysine" evidence="1">
    <location>
        <position position="230"/>
    </location>
</feature>
<protein>
    <recommendedName>
        <fullName evidence="1">Serine hydroxymethyltransferase</fullName>
        <shortName evidence="1">SHMT</shortName>
        <shortName evidence="1">Serine methylase</shortName>
        <ecNumber evidence="1">2.1.2.1</ecNumber>
    </recommendedName>
</protein>